<feature type="chain" id="PRO_0000142559" description="Nus factor SuhB">
    <location>
        <begin position="1"/>
        <end position="267"/>
    </location>
</feature>
<feature type="binding site" evidence="9 11">
    <location>
        <position position="67"/>
    </location>
    <ligand>
        <name>Mg(2+)</name>
        <dbReference type="ChEBI" id="CHEBI:18420"/>
    </ligand>
</feature>
<feature type="binding site" evidence="1">
    <location>
        <position position="67"/>
    </location>
    <ligand>
        <name>substrate</name>
    </ligand>
</feature>
<feature type="binding site" evidence="9 11">
    <location>
        <position position="84"/>
    </location>
    <ligand>
        <name>Mg(2+)</name>
        <dbReference type="ChEBI" id="CHEBI:18420"/>
    </ligand>
</feature>
<feature type="binding site" evidence="1">
    <location>
        <begin position="86"/>
        <end position="89"/>
    </location>
    <ligand>
        <name>substrate</name>
    </ligand>
</feature>
<feature type="binding site" evidence="9 11">
    <location>
        <position position="86"/>
    </location>
    <ligand>
        <name>Mg(2+)</name>
        <dbReference type="ChEBI" id="CHEBI:18420"/>
    </ligand>
</feature>
<feature type="binding site" evidence="1">
    <location>
        <position position="183"/>
    </location>
    <ligand>
        <name>substrate</name>
    </ligand>
</feature>
<feature type="binding site" evidence="1">
    <location>
        <position position="212"/>
    </location>
    <ligand>
        <name>substrate</name>
    </ligand>
</feature>
<feature type="mutagenesis site" description="Loss of IMPase activity, still complements dnaB121 helicase mutation." evidence="2">
    <original>D</original>
    <variation>N</variation>
    <location>
        <position position="87"/>
    </location>
</feature>
<feature type="mutagenesis site" description="In suhB10; decreases polypeptide chain elongation rate, grows at 30 but not 25 degrees Celsius; when associated with A-250." evidence="14">
    <original>R</original>
    <variation>C</variation>
    <location>
        <position position="139"/>
    </location>
</feature>
<feature type="mutagenesis site" description="No growth at 30 degrees Celsius, IMPase activity not inhibited by RNA polymerase (RNAP)." evidence="3">
    <original>G</original>
    <variation>V</variation>
    <location>
        <position position="173"/>
    </location>
</feature>
<feature type="mutagenesis site" description="Some growth at 30 degrees Celsius, greater IMPase activity, partially inhibited by RNAP." evidence="3">
    <original>R</original>
    <variation>A</variation>
    <location>
        <position position="183"/>
    </location>
</feature>
<feature type="mutagenesis site" description="Grows at 30 degrees Celsius, makes more dimer, partially inhibited by RNAP, crystallizes." evidence="3">
    <original>R</original>
    <variation>A</variation>
    <location>
        <position position="184"/>
    </location>
</feature>
<feature type="mutagenesis site" description="No growth at 30 degrees Celsius, IMPase activity not inhibited by RNAP." evidence="3">
    <original>R</original>
    <variation>I</variation>
    <location>
        <position position="184"/>
    </location>
</feature>
<feature type="mutagenesis site" description="In suhB10; decreases polypeptide chain elongation rate, grows at 30 but not 25 degrees Celsius; when associated with C-139." evidence="14">
    <original>V</original>
    <variation>A</variation>
    <location>
        <position position="250"/>
    </location>
</feature>
<feature type="mutagenesis site" description="3-fold decreased affinity for NusA, less efficient in delaying or suppressing Rho-dependent transcription termination." evidence="9">
    <original>KAML</original>
    <variation>AAMA</variation>
    <location>
        <begin position="251"/>
        <end position="254"/>
    </location>
</feature>
<feature type="sequence conflict" description="In Ref. 1; AAA67506." evidence="21" ref="1">
    <original>R</original>
    <variation>L</variation>
    <location>
        <position position="141"/>
    </location>
</feature>
<feature type="helix" evidence="37">
    <location>
        <begin position="3"/>
        <end position="23"/>
    </location>
</feature>
<feature type="helix" evidence="37">
    <location>
        <begin position="28"/>
        <end position="31"/>
    </location>
</feature>
<feature type="strand" evidence="37">
    <location>
        <begin position="33"/>
        <end position="35"/>
    </location>
</feature>
<feature type="helix" evidence="37">
    <location>
        <begin position="43"/>
        <end position="58"/>
    </location>
</feature>
<feature type="strand" evidence="37">
    <location>
        <begin position="62"/>
        <end position="66"/>
    </location>
</feature>
<feature type="turn" evidence="37">
    <location>
        <begin position="67"/>
        <end position="69"/>
    </location>
</feature>
<feature type="strand" evidence="37">
    <location>
        <begin position="70"/>
        <end position="72"/>
    </location>
</feature>
<feature type="strand" evidence="37">
    <location>
        <begin position="75"/>
        <end position="87"/>
    </location>
</feature>
<feature type="helix" evidence="37">
    <location>
        <begin position="89"/>
        <end position="93"/>
    </location>
</feature>
<feature type="strand" evidence="37">
    <location>
        <begin position="100"/>
        <end position="107"/>
    </location>
</feature>
<feature type="strand" evidence="37">
    <location>
        <begin position="110"/>
        <end position="118"/>
    </location>
</feature>
<feature type="turn" evidence="37">
    <location>
        <begin position="119"/>
        <end position="122"/>
    </location>
</feature>
<feature type="strand" evidence="37">
    <location>
        <begin position="123"/>
        <end position="128"/>
    </location>
</feature>
<feature type="turn" evidence="37">
    <location>
        <begin position="129"/>
        <end position="131"/>
    </location>
</feature>
<feature type="strand" evidence="37">
    <location>
        <begin position="132"/>
        <end position="135"/>
    </location>
</feature>
<feature type="strand" evidence="37">
    <location>
        <begin position="146"/>
        <end position="148"/>
    </location>
</feature>
<feature type="strand" evidence="37">
    <location>
        <begin position="152"/>
        <end position="155"/>
    </location>
</feature>
<feature type="helix" evidence="37">
    <location>
        <begin position="162"/>
        <end position="164"/>
    </location>
</feature>
<feature type="helix" evidence="37">
    <location>
        <begin position="165"/>
        <end position="176"/>
    </location>
</feature>
<feature type="strand" evidence="37">
    <location>
        <begin position="179"/>
        <end position="184"/>
    </location>
</feature>
<feature type="helix" evidence="37">
    <location>
        <begin position="188"/>
        <end position="196"/>
    </location>
</feature>
<feature type="strand" evidence="37">
    <location>
        <begin position="199"/>
        <end position="207"/>
    </location>
</feature>
<feature type="helix" evidence="37">
    <location>
        <begin position="210"/>
        <end position="222"/>
    </location>
</feature>
<feature type="strand" evidence="37">
    <location>
        <begin position="226"/>
        <end position="228"/>
    </location>
</feature>
<feature type="strand" evidence="37">
    <location>
        <begin position="232"/>
        <end position="234"/>
    </location>
</feature>
<feature type="helix" evidence="37">
    <location>
        <begin position="236"/>
        <end position="239"/>
    </location>
</feature>
<feature type="strand" evidence="37">
    <location>
        <begin position="242"/>
        <end position="245"/>
    </location>
</feature>
<feature type="helix" evidence="37">
    <location>
        <begin position="247"/>
        <end position="264"/>
    </location>
</feature>
<gene>
    <name evidence="17" type="primary">suhB</name>
    <name evidence="19" type="synonym">ssyA</name>
    <name type="ordered locus">b2533</name>
    <name type="ordered locus">JW2517</name>
</gene>
<reference key="1">
    <citation type="journal article" date="1990" name="J. Bacteriol.">
        <title>A mutation that enhances synthesis of sigma 32 and suppresses temperature-sensitive growth of the rpoH15 mutant of Escherichia coli.</title>
        <authorList>
            <person name="Yano R."/>
            <person name="Nagai H."/>
            <person name="Shiba K."/>
            <person name="Yura T."/>
        </authorList>
    </citation>
    <scope>NUCLEOTIDE SEQUENCE [GENOMIC DNA]</scope>
    <scope>FUNCTION AS A SUPPRESSOR OF RPOH MISSENSE MUTATION</scope>
    <source>
        <strain>K12 / MC4100 / ATCC 35695 / DSM 6574</strain>
    </source>
</reference>
<reference key="2">
    <citation type="journal article" date="1997" name="DNA Res.">
        <title>Construction of a contiguous 874-kb sequence of the Escherichia coli-K12 genome corresponding to 50.0-68.8 min on the linkage map and analysis of its sequence features.</title>
        <authorList>
            <person name="Yamamoto Y."/>
            <person name="Aiba H."/>
            <person name="Baba T."/>
            <person name="Hayashi K."/>
            <person name="Inada T."/>
            <person name="Isono K."/>
            <person name="Itoh T."/>
            <person name="Kimura S."/>
            <person name="Kitagawa M."/>
            <person name="Makino K."/>
            <person name="Miki T."/>
            <person name="Mitsuhashi N."/>
            <person name="Mizobuchi K."/>
            <person name="Mori H."/>
            <person name="Nakade S."/>
            <person name="Nakamura Y."/>
            <person name="Nashimoto H."/>
            <person name="Oshima T."/>
            <person name="Oyama S."/>
            <person name="Saito N."/>
            <person name="Sampei G."/>
            <person name="Satoh Y."/>
            <person name="Sivasundaram S."/>
            <person name="Tagami H."/>
            <person name="Takahashi H."/>
            <person name="Takeda J."/>
            <person name="Takemoto K."/>
            <person name="Uehara K."/>
            <person name="Wada C."/>
            <person name="Yamagata S."/>
            <person name="Horiuchi T."/>
        </authorList>
    </citation>
    <scope>NUCLEOTIDE SEQUENCE [LARGE SCALE GENOMIC DNA]</scope>
    <source>
        <strain>K12 / W3110 / ATCC 27325 / DSM 5911</strain>
    </source>
</reference>
<reference key="3">
    <citation type="journal article" date="1997" name="Science">
        <title>The complete genome sequence of Escherichia coli K-12.</title>
        <authorList>
            <person name="Blattner F.R."/>
            <person name="Plunkett G. III"/>
            <person name="Bloch C.A."/>
            <person name="Perna N.T."/>
            <person name="Burland V."/>
            <person name="Riley M."/>
            <person name="Collado-Vides J."/>
            <person name="Glasner J.D."/>
            <person name="Rode C.K."/>
            <person name="Mayhew G.F."/>
            <person name="Gregor J."/>
            <person name="Davis N.W."/>
            <person name="Kirkpatrick H.A."/>
            <person name="Goeden M.A."/>
            <person name="Rose D.J."/>
            <person name="Mau B."/>
            <person name="Shao Y."/>
        </authorList>
    </citation>
    <scope>NUCLEOTIDE SEQUENCE [LARGE SCALE GENOMIC DNA]</scope>
    <source>
        <strain>K12 / MG1655 / ATCC 47076</strain>
    </source>
</reference>
<reference key="4">
    <citation type="journal article" date="2006" name="Mol. Syst. Biol.">
        <title>Highly accurate genome sequences of Escherichia coli K-12 strains MG1655 and W3110.</title>
        <authorList>
            <person name="Hayashi K."/>
            <person name="Morooka N."/>
            <person name="Yamamoto Y."/>
            <person name="Fujita K."/>
            <person name="Isono K."/>
            <person name="Choi S."/>
            <person name="Ohtsubo E."/>
            <person name="Baba T."/>
            <person name="Wanner B.L."/>
            <person name="Mori H."/>
            <person name="Horiuchi T."/>
        </authorList>
    </citation>
    <scope>NUCLEOTIDE SEQUENCE [LARGE SCALE GENOMIC DNA]</scope>
    <source>
        <strain>K12 / W3110 / ATCC 27325 / DSM 5911</strain>
    </source>
</reference>
<reference key="5">
    <citation type="journal article" date="1984" name="J. Bacteriol.">
        <title>Mutation that suppresses the protein export defect of the secY mutation and causes cold-sensitive growth of Escherichia coli.</title>
        <authorList>
            <person name="Shiba K."/>
            <person name="Ito K."/>
            <person name="Yura T."/>
        </authorList>
    </citation>
    <scope>FUNCTION AS A SUPPRESSOR OF SECY TEMPERATURE-SENSITIVE MUTATION</scope>
    <source>
        <strain>K12</strain>
    </source>
</reference>
<reference key="6">
    <citation type="journal article" date="1991" name="J. Bacteriol.">
        <title>Phosphatidylinositol, a phospholipid of ice-nucleating bacteria.</title>
        <authorList>
            <person name="Kozloff L.M."/>
            <person name="Turner M.A."/>
            <person name="Arellano F."/>
            <person name="Lute M."/>
        </authorList>
    </citation>
    <scope>SUBSTRATE LEVELS IN E.COLI</scope>
    <source>
        <strain>K12 / HB101</strain>
    </source>
</reference>
<reference key="7">
    <citation type="journal article" date="1991" name="J. Biol. Chem.">
        <title>Analysis of an Escherichia coli dnaB temperature-sensitive insertion mutation and its cold-sensitive extragenic suppressor.</title>
        <authorList>
            <person name="Chang S.F."/>
            <person name="Ng D."/>
            <person name="Baird L."/>
            <person name="Georgopoulos C."/>
        </authorList>
    </citation>
    <scope>FUNCTION AS A SUPPRESSOR OF DNAB MISSENSE MUTATION</scope>
    <source>
        <strain>K12 / W3110 / B178</strain>
    </source>
</reference>
<reference key="8">
    <citation type="journal article" date="1995" name="J. Bacteriol.">
        <title>Inositol monophosphatase activity from the Escherichia coli suhB gene product.</title>
        <authorList>
            <person name="Matsuhisa A."/>
            <person name="Suzuki N."/>
            <person name="Noda T."/>
            <person name="Shiba K."/>
        </authorList>
    </citation>
    <scope>FUNCTION AS AN INOSITOL MONOPHOSPHATASE</scope>
    <scope>CATALYTIC ACTIVITY</scope>
    <scope>SUBSTRATE SPECIFICITY</scope>
    <scope>COFACTOR</scope>
    <scope>ACTIVITY REGULATION</scope>
    <scope>BIOPHYSICOCHEMICAL PROPERTIES</scope>
</reference>
<reference key="9">
    <citation type="journal article" date="1995" name="Biochimie">
        <title>Lethal double-stranded RNA processing activity of ribonuclease III in the absence of suhB protein of Escherichia coli.</title>
        <authorList>
            <person name="Inada T."/>
            <person name="Nakamura Y."/>
        </authorList>
    </citation>
    <scope>GENETIC ANALYSIS</scope>
    <scope>MUTAGENESIS OF ARG-139 AND VAL-250</scope>
    <source>
        <strain>K12</strain>
    </source>
</reference>
<reference key="10">
    <citation type="journal article" date="1996" name="Biochimie">
        <title>Autogenous control of the suhB gene expression of Escherichia coli.</title>
        <authorList>
            <person name="Inada T."/>
            <person name="Nakamura Y."/>
        </authorList>
    </citation>
    <scope>INDUCTION</scope>
    <source>
        <strain>K12</strain>
    </source>
</reference>
<reference key="11">
    <citation type="journal article" date="2000" name="Biochemistry">
        <title>Overexpression, purification, and analysis of complementation behavior of E. coli SuhB protein: comparison with bacterial and archaeal inositol monophosphatases.</title>
        <authorList>
            <person name="Chen L."/>
            <person name="Roberts M.F."/>
        </authorList>
    </citation>
    <scope>FUNCTION AS AN INOSITOL MONOPHOSPHATASE</scope>
    <scope>CATALYTIC ACTIVITY</scope>
    <scope>SUBSTRATE SPECIFICITY</scope>
    <scope>COFACTOR</scope>
    <scope>ACTIVITY REGULATION</scope>
    <scope>BIOPHYSICOCHEMICAL PROPERTIES</scope>
    <scope>SUBUNIT</scope>
    <scope>SUBCELLULAR LOCATION</scope>
    <scope>MUTAGENESIS OF ASP-87</scope>
</reference>
<reference key="12">
    <citation type="journal article" date="2012" name="J. Am. Chem. Soc.">
        <title>Determination of the lithium binding site in inositol monophosphatase, the putative target for lithium therapy, by magic-angle-spinning solid-state NMR.</title>
        <authorList>
            <person name="Haimovich A."/>
            <person name="Eliav U."/>
            <person name="Goldbourt A."/>
        </authorList>
    </citation>
    <scope>ACTIVITY REGULATION</scope>
</reference>
<reference key="13">
    <citation type="journal article" date="2016" name="MBio">
        <title>SuhB Associates with Nus Factors To Facilitate 30S Ribosome Biogenesis in Escherichia coli.</title>
        <authorList>
            <person name="Singh N."/>
            <person name="Bubunenko M."/>
            <person name="Smith C."/>
            <person name="Abbott D.M."/>
            <person name="Stringer A.M."/>
            <person name="Shi R."/>
            <person name="Court D.L."/>
            <person name="Wade J.T."/>
        </authorList>
    </citation>
    <scope>FUNCTION IN RRNA MATURATION</scope>
    <scope>SUBUNIT</scope>
    <scope>DISRUPTION PHENOTYPE</scope>
    <source>
        <strain>K12 / MG1655 / ATCC 47076</strain>
        <strain>K12 / W3110 / ATCC 27325 / DSM 5911</strain>
    </source>
</reference>
<reference key="14">
    <citation type="journal article" date="2017" name="Nat. Commun.">
        <title>Identification of regulatory targets for the bacterial Nus factor complex.</title>
        <authorList>
            <person name="Baniulyte G."/>
            <person name="Singh N."/>
            <person name="Benoit C."/>
            <person name="Johnson R."/>
            <person name="Ferguson R."/>
            <person name="Paramo M."/>
            <person name="Stringer A.M."/>
            <person name="Scott A."/>
            <person name="Lapierre P."/>
            <person name="Wade J.T."/>
        </authorList>
    </citation>
    <scope>FUNCTION IN GENE REGULATION</scope>
    <scope>SUBUNIT</scope>
    <scope>INDUCTION</scope>
    <source>
        <strain>K12 / MG1655 / ATCC 47076</strain>
    </source>
</reference>
<reference key="15">
    <citation type="journal article" date="2019" name="Nucleic Acids Res.">
        <title>SuhB is an integral part of the ribosomal antitermination complex and interacts with NusA.</title>
        <authorList>
            <person name="Dudenhoeffer B.R."/>
            <person name="Schneider H."/>
            <person name="Schweimer K."/>
            <person name="Knauer S.H."/>
        </authorList>
    </citation>
    <scope>INTERACTION WITH NUSA</scope>
    <scope>PRECURSOR RRNA-BINDING</scope>
</reference>
<reference evidence="32" key="16">
    <citation type="journal article" date="2007" name="J. Biol. Chem.">
        <title>The structure of the R184A mutant of the inositol monophosphatase encoded by suhB and implications for its functional interactions in Escherichia coli.</title>
        <authorList>
            <person name="Wang Y."/>
            <person name="Stieglitz K.A."/>
            <person name="Bubunenko M."/>
            <person name="Court D.L."/>
            <person name="Stec B."/>
            <person name="Roberts M.F."/>
        </authorList>
    </citation>
    <scope>X-RAY CRYSTALLOGRAPHY (1.90 ANGSTROMS)</scope>
    <scope>CATALYTIC ACTIVITY</scope>
    <scope>BIOPHYSICOCHEMICAL PROPERTIES</scope>
    <scope>SUBUNIT</scope>
    <scope>INTERACTION WITH RNA POLYMERASE</scope>
    <scope>DISRUPTION PHENOTYPE</scope>
    <scope>MUTAGENESIS OF GLY-173; ARG-183 AND ARG-184</scope>
</reference>
<reference evidence="33 34" key="17">
    <citation type="journal article" date="2019" name="Nucleic Acids Res.">
        <title>Structural basis for the function of SuhB as a transcription factor in ribosomal RNA synthesis.</title>
        <authorList>
            <person name="Huang Y.H."/>
            <person name="Said N."/>
            <person name="Loll B."/>
            <person name="Wahl M.C."/>
        </authorList>
    </citation>
    <scope>X-RAY CRYSTALLOGRAPHY (1.65 ANGSTROMS) IN COMPLEX WITH MG(2+) ALONE AND IN COMPLEX WITH NUSA</scope>
    <scope>COFACTOR</scope>
    <scope>SUBUNIT</scope>
    <scope>INTERACTION WITH NUSA</scope>
    <scope>PRECURSOR RRNA-BINDING</scope>
    <scope>MUTAGENESIS OF 251-LYS--LEU-254</scope>
    <source>
        <strain>K12 / DH5-alpha</strain>
    </source>
</reference>
<reference evidence="35 36" key="18">
    <citation type="journal article" date="2020" name="Mol. Cell">
        <title>Structure-Based Mechanisms of a Molecular RNA Polymerase/Chaperone Machine Required for Ribosome Biosynthesis.</title>
        <authorList>
            <person name="Huang Y.H."/>
            <person name="Hilal T."/>
            <person name="Loll B."/>
            <person name="Buerger J."/>
            <person name="Mielke T."/>
            <person name="Boettcher C."/>
            <person name="Said N."/>
            <person name="Wahl M.C."/>
        </authorList>
    </citation>
    <scope>STRUCTURE BY ELECTRON MICROSCOPY (3.80 ANGSTROMS) OF RRNA TRANSCRIPTION-ELONGATION-ANTITERMINATION COMPLEXES WITH AND WITHOUT S4</scope>
    <scope>FUNCTION</scope>
    <scope>SUBUNIT</scope>
    <scope>COFACTOR</scope>
</reference>
<sequence length="267" mass="29172">MHPMLNIAVRAARKAGNLIAKNYETPDAVEASQKGSNDFVTNVDKAAEAVIIDTIRKSYPQHTIITEESGELEGTDQDVQWVIDPLDGTTNFIKRLPHFAVSIAVRIKGRTEVAVVYDPMRNELFTATRGQGAQLNGYRLRGSTARDLDGTILATGFPFKAKQYATTYINIVGKLFNECADFRRTGSAALDLAYVAAGRVDGFFEIGLRPWDFAAGELLVREAGGIVSDFTGGHNYMLTGNIVAGNPRVVKAMLANMRDELSDALKR</sequence>
<organism>
    <name type="scientific">Escherichia coli (strain K12)</name>
    <dbReference type="NCBI Taxonomy" id="83333"/>
    <lineage>
        <taxon>Bacteria</taxon>
        <taxon>Pseudomonadati</taxon>
        <taxon>Pseudomonadota</taxon>
        <taxon>Gammaproteobacteria</taxon>
        <taxon>Enterobacterales</taxon>
        <taxon>Enterobacteriaceae</taxon>
        <taxon>Escherichia</taxon>
    </lineage>
</organism>
<comment type="function">
    <text evidence="2 7 8 9 11 23 24 26 29 30 31">Part of the processive rRNA transcription and antitermination complex (rrnTAC). The complex forms an RNA-chaperone ring around the RNA exit tunnel of RNA polymerase (RNAP). It supports rapid transcription and antitermination of rRNA operons, cotranscriptional rRNA folding, and annealing of distal rRNA regions to allow correct ribosome biogenesis. This subunit may play a central role in organizing the structure (PubMed:32871103). Involved in 30S ribosomal subunit biogenesis; thought to be required for loop formation between NusB/NusE (rpsJ, ribosomal protein S10) bound to boxA upstream of the rRNA operons and the elongating RNAP complex. This would promote correct co-transcriptional folding of rRNA. Plays a role in transcription antitermination in a plasmid context in vivo (PubMed:26980831). Required for rrn transcription antitermination; required for integration of NusB/NusE into the antitermination complex (PubMed:31020314). The Nus factor complex (NusA, NusB, NusE (rpsJ), NusG and SuhB) represses expression of suhB and possibly other genes via boxA; the Nus complex prevents or promotes Rho-mediated transcription termination depending on gene context (PubMed:29229908). Involved in post-transcriptional control of gene expression (Probable). Enzymatic activity is not required for complementation of the cold-sensitive phenotype of the dnaB121 mutation (Probable) (PubMed:10747806).</text>
</comment>
<comment type="function">
    <text evidence="2 13">Has D,L-inositol-1-monophosphatase and beta-glycerophosphatase activity, has less to no activity against a number of other substrates (PubMed:8002619). 2.5-fold more active on 1D-inositol-1-monophosphate than L-inositol-1-monophosphate (1D-myo-inositol 3-phosphate). Specific activity increases significantly upon heating. Only beta-glycerophosphate and adenosine 2'-monophosphate are alternative substrates (PubMed:10747806).</text>
</comment>
<comment type="function">
    <text evidence="3 4 5 7 12 13 14">Required for growth at low temperatures (PubMed:17652087, PubMed:1847383, PubMed:2138605, PubMed:26980831, PubMed:6389495, PubMed:8002619, PubMed:8589060). Identified as a suppressor (ssyA3) of a temperature-sensitive, protein export missense mutation of secY (secY24), allows growth at 42 but not 30 degrees Celsius (PubMed:6389495). Identified as a suppressor (suhB2) of an rpoH missense mutation (rpoH15), allowing growth at 37 and 40 but not 25, 30 or 34 degrees Celsius, increases expression of RpoH (PubMed:2138605). Identified as a suppressor of a dnaB helicase missense mutation (dnaB121), restores growth at 42 but not 30 degrees Celsius (PubMed:1847383). In both suhB2 and ssyA3 there is an insertion in the 5' region of the gene which prevents SuhB protein expression (PubMed:8002619, PubMed:8589060). Missense mutant suhB10 is suppressed by mutations in RNase III (rnc), showing genetic interaction between them (PubMed:8589060). Deletion of suhB is suppressed by mutations in RNase III, by a mutation in nusA or deletion of nusB, indicating that in the absence of SuhB the Nus complex inhibits growth (PubMed:26980831).</text>
</comment>
<comment type="catalytic activity">
    <reaction evidence="2 13">
        <text>a myo-inositol phosphate + H2O = myo-inositol + phosphate</text>
        <dbReference type="Rhea" id="RHEA:24056"/>
        <dbReference type="ChEBI" id="CHEBI:15377"/>
        <dbReference type="ChEBI" id="CHEBI:17268"/>
        <dbReference type="ChEBI" id="CHEBI:43474"/>
        <dbReference type="ChEBI" id="CHEBI:84139"/>
        <dbReference type="EC" id="3.1.3.25"/>
    </reaction>
</comment>
<comment type="catalytic activity">
    <reaction evidence="2 3">
        <text>1D-myo-inositol 1-phosphate + H2O = myo-inositol + phosphate</text>
        <dbReference type="Rhea" id="RHEA:27670"/>
        <dbReference type="ChEBI" id="CHEBI:15377"/>
        <dbReference type="ChEBI" id="CHEBI:17268"/>
        <dbReference type="ChEBI" id="CHEBI:43474"/>
        <dbReference type="ChEBI" id="CHEBI:58433"/>
        <dbReference type="EC" id="3.1.3.25"/>
    </reaction>
</comment>
<comment type="catalytic activity">
    <reaction evidence="2">
        <text>1D-myo-inositol 3-phosphate + H2O = myo-inositol + phosphate</text>
        <dbReference type="Rhea" id="RHEA:30739"/>
        <dbReference type="ChEBI" id="CHEBI:15377"/>
        <dbReference type="ChEBI" id="CHEBI:17268"/>
        <dbReference type="ChEBI" id="CHEBI:43474"/>
        <dbReference type="ChEBI" id="CHEBI:58401"/>
        <dbReference type="EC" id="3.1.3.25"/>
    </reaction>
</comment>
<comment type="cofactor">
    <cofactor evidence="2 9 11 13">
        <name>Mg(2+)</name>
        <dbReference type="ChEBI" id="CHEBI:18420"/>
    </cofactor>
    <text evidence="2">Partial activity is seen with Co(2+), Ni(2+), Mn(2+), Zn(2+) and Fe(2+); in the presence of Mg(2+) these cations inhibit.</text>
</comment>
<comment type="activity regulation">
    <text evidence="2 6 13 27">Inhibited by Li(+) (Probable) (PubMed:10747806, PubMed:8002619). Li(+) binds to Asp-84, Asp-87 and Asp-212 (PubMed:22384802).</text>
</comment>
<comment type="biophysicochemical properties">
    <kinetics>
        <KM evidence="13">71 uM for myo-inositol phosphate</KM>
        <KM evidence="2">64 uM for 1D-myo-inositol 1-phosphate</KM>
        <KM evidence="2">79 uM for 1D-myo-inositol 3-phosphate</KM>
        <KM evidence="2">69 uM for myo-inositol phosphate</KM>
        <KM evidence="2">92 uM for myo-inositol phosphate after 5 minutes at 70 degrees Celsius</KM>
        <KM evidence="3">110 uM for 1D-myo-inositol 1-phosphate</KM>
        <Vmax evidence="13">12.3 umol/min/mg enzyme</Vmax>
        <Vmax evidence="2">6.9 umol/min/mg enzyme for 1D-myo-inositol 1-phosphate</Vmax>
        <Vmax evidence="2">2.66 umol/min/mg enzyme for 1D-myo-inositol 3-phosphate</Vmax>
        <Vmax evidence="2">3.38 umol/min/mg enzyme for myo-inositol phosphate</Vmax>
        <Vmax evidence="2">27.6 umol/min/mg enzyme for myo-inositol phosphate after 5 minutes at 70 degrees Celsius</Vmax>
    </kinetics>
    <phDependence>
        <text evidence="13">Optimum pH is 7.8.</text>
    </phDependence>
    <temperatureDependence>
        <text evidence="2">Optimum temperature is 80 degrees Celsius, 90% of activity remains after heating at 70 degrees Celsius for 5 minutes.</text>
    </temperatureDependence>
</comment>
<comment type="subunit">
    <text evidence="2 3 7 8 9 10 11 28">Monomer (PubMed:10747806, PubMed:31127279). A monomer-dimer equilibrium (PubMed:17652087). Homodimer (PubMed:31020314, PubMed:32871103). The rRNA transcription and antitermination complex (rrnTAC) consists of RNA polymerase (RNAP), NusA, NusB, NusE (rpsJ), NusG, SubB, ribosomal protein S4, DNA and precursor rRNA; S4 is more flexible than other subunits (PubMed:31020314, PubMed:31127279, PubMed:32871103). Binds to RNAP, which decreases IMPase activity against 1D-myo-inositol 1-phosphate (Probable) (PubMed:17652087). Association with rRNA gene-transcribing RNAP is dependent on NusB (PubMed:26980831, PubMed:29229908). Interacts with AR2 domain of NusA; crystallizes as a 2:1 SuhB:NusA heterotrimer (PubMed:31020314, PubMed:31127279).</text>
</comment>
<comment type="subcellular location">
    <subcellularLocation>
        <location evidence="22">Cytoplasm</location>
    </subcellularLocation>
</comment>
<comment type="induction">
    <text evidence="8 15">Transcription is autoregulated (PubMed:8831954). Repressed by the Nus factor complex (NusA, NusB, NusE (rpsJ), NusG and SuhB) (PubMed:29229908).</text>
</comment>
<comment type="disruption phenotype">
    <text evidence="3 7">Conditionally lethal, cells are unable to grow at 30 degrees Celsius and less, grow poorly at 37 degrees Celsius, but do grow at 42 degrees Celsius.</text>
</comment>
<comment type="miscellaneous">
    <text evidence="23 25">E.coli makes very low amounts of myo-inositol-containing phospholipids, so the catalytic necessity for this enzyme is low.</text>
</comment>
<comment type="similarity">
    <text evidence="21">Belongs to the inositol monophosphatase superfamily.</text>
</comment>
<name>SUHB_ECOLI</name>
<dbReference type="EC" id="3.1.3.25" evidence="13"/>
<dbReference type="EMBL" id="M34828">
    <property type="protein sequence ID" value="AAA67506.1"/>
    <property type="molecule type" value="Genomic_DNA"/>
</dbReference>
<dbReference type="EMBL" id="U00096">
    <property type="protein sequence ID" value="AAC75586.1"/>
    <property type="molecule type" value="Genomic_DNA"/>
</dbReference>
<dbReference type="EMBL" id="AP009048">
    <property type="protein sequence ID" value="BAA16427.1"/>
    <property type="molecule type" value="Genomic_DNA"/>
</dbReference>
<dbReference type="PIR" id="D65030">
    <property type="entry name" value="D65030"/>
</dbReference>
<dbReference type="RefSeq" id="NP_417028.1">
    <property type="nucleotide sequence ID" value="NC_000913.3"/>
</dbReference>
<dbReference type="RefSeq" id="WP_000553451.1">
    <property type="nucleotide sequence ID" value="NZ_STEB01000011.1"/>
</dbReference>
<dbReference type="PDB" id="2QFL">
    <property type="method" value="X-ray"/>
    <property type="resolution" value="1.90 A"/>
    <property type="chains" value="A=1-267"/>
</dbReference>
<dbReference type="PDB" id="6IB7">
    <property type="method" value="X-ray"/>
    <property type="resolution" value="2.25 A"/>
    <property type="chains" value="A=1-267"/>
</dbReference>
<dbReference type="PDB" id="6IB8">
    <property type="method" value="X-ray"/>
    <property type="resolution" value="1.65 A"/>
    <property type="chains" value="A/B=1-267"/>
</dbReference>
<dbReference type="PDB" id="6TQN">
    <property type="method" value="EM"/>
    <property type="resolution" value="3.80 A"/>
    <property type="chains" value="S/T=1-267"/>
</dbReference>
<dbReference type="PDB" id="6TQO">
    <property type="method" value="EM"/>
    <property type="resolution" value="4.00 A"/>
    <property type="chains" value="S/T=1-267"/>
</dbReference>
<dbReference type="PDBsum" id="2QFL"/>
<dbReference type="PDBsum" id="6IB7"/>
<dbReference type="PDBsum" id="6IB8"/>
<dbReference type="PDBsum" id="6TQN"/>
<dbReference type="PDBsum" id="6TQO"/>
<dbReference type="SMR" id="P0ADG4"/>
<dbReference type="BioGRID" id="4260600">
    <property type="interactions" value="15"/>
</dbReference>
<dbReference type="BioGRID" id="851613">
    <property type="interactions" value="5"/>
</dbReference>
<dbReference type="FunCoup" id="P0ADG4">
    <property type="interactions" value="699"/>
</dbReference>
<dbReference type="IntAct" id="P0ADG4">
    <property type="interactions" value="10"/>
</dbReference>
<dbReference type="STRING" id="511145.b2533"/>
<dbReference type="jPOST" id="P0ADG4"/>
<dbReference type="PaxDb" id="511145-b2533"/>
<dbReference type="EnsemblBacteria" id="AAC75586">
    <property type="protein sequence ID" value="AAC75586"/>
    <property type="gene ID" value="b2533"/>
</dbReference>
<dbReference type="GeneID" id="75206226"/>
<dbReference type="GeneID" id="947285"/>
<dbReference type="KEGG" id="ecj:JW2517"/>
<dbReference type="KEGG" id="eco:b2533"/>
<dbReference type="KEGG" id="ecoc:C3026_14035"/>
<dbReference type="PATRIC" id="fig|1411691.4.peg.4201"/>
<dbReference type="EchoBASE" id="EB0976"/>
<dbReference type="eggNOG" id="COG0483">
    <property type="taxonomic scope" value="Bacteria"/>
</dbReference>
<dbReference type="HOGENOM" id="CLU_044118_0_4_6"/>
<dbReference type="InParanoid" id="P0ADG4"/>
<dbReference type="OMA" id="ERGLHPW"/>
<dbReference type="OrthoDB" id="9785695at2"/>
<dbReference type="PhylomeDB" id="P0ADG4"/>
<dbReference type="BioCyc" id="EcoCyc:EG10983-MONOMER"/>
<dbReference type="BioCyc" id="MetaCyc:EG10983-MONOMER"/>
<dbReference type="BRENDA" id="3.1.3.25">
    <property type="organism ID" value="2026"/>
</dbReference>
<dbReference type="SABIO-RK" id="P0ADG4"/>
<dbReference type="EvolutionaryTrace" id="P0ADG4"/>
<dbReference type="PRO" id="PR:P0ADG4"/>
<dbReference type="Proteomes" id="UP000000625">
    <property type="component" value="Chromosome"/>
</dbReference>
<dbReference type="GO" id="GO:0005737">
    <property type="term" value="C:cytoplasm"/>
    <property type="evidence" value="ECO:0000314"/>
    <property type="project" value="EcoliWiki"/>
</dbReference>
<dbReference type="GO" id="GO:0005829">
    <property type="term" value="C:cytosol"/>
    <property type="evidence" value="ECO:0000314"/>
    <property type="project" value="EcoCyc"/>
</dbReference>
<dbReference type="GO" id="GO:0047954">
    <property type="term" value="F:glycerol-2-phosphatase activity"/>
    <property type="evidence" value="ECO:0000314"/>
    <property type="project" value="EcoCyc"/>
</dbReference>
<dbReference type="GO" id="GO:0008934">
    <property type="term" value="F:inositol monophosphate 1-phosphatase activity"/>
    <property type="evidence" value="ECO:0000314"/>
    <property type="project" value="EcoliWiki"/>
</dbReference>
<dbReference type="GO" id="GO:0052832">
    <property type="term" value="F:inositol monophosphate 3-phosphatase activity"/>
    <property type="evidence" value="ECO:0007669"/>
    <property type="project" value="RHEA"/>
</dbReference>
<dbReference type="GO" id="GO:0031403">
    <property type="term" value="F:lithium ion binding"/>
    <property type="evidence" value="ECO:0000314"/>
    <property type="project" value="EcoliWiki"/>
</dbReference>
<dbReference type="GO" id="GO:0000287">
    <property type="term" value="F:magnesium ion binding"/>
    <property type="evidence" value="ECO:0000314"/>
    <property type="project" value="EcoliWiki"/>
</dbReference>
<dbReference type="GO" id="GO:0042134">
    <property type="term" value="F:rRNA primary transcript binding"/>
    <property type="evidence" value="ECO:0000314"/>
    <property type="project" value="EcoCyc"/>
</dbReference>
<dbReference type="GO" id="GO:0001072">
    <property type="term" value="F:transcription antitermination factor activity, RNA binding"/>
    <property type="evidence" value="ECO:0000314"/>
    <property type="project" value="EcoCyc"/>
</dbReference>
<dbReference type="GO" id="GO:0006020">
    <property type="term" value="P:inositol metabolic process"/>
    <property type="evidence" value="ECO:0000318"/>
    <property type="project" value="GO_Central"/>
</dbReference>
<dbReference type="GO" id="GO:0046854">
    <property type="term" value="P:phosphatidylinositol phosphate biosynthetic process"/>
    <property type="evidence" value="ECO:0007669"/>
    <property type="project" value="InterPro"/>
</dbReference>
<dbReference type="GO" id="GO:0042254">
    <property type="term" value="P:ribosome biogenesis"/>
    <property type="evidence" value="ECO:0007669"/>
    <property type="project" value="UniProtKB-KW"/>
</dbReference>
<dbReference type="GO" id="GO:0007165">
    <property type="term" value="P:signal transduction"/>
    <property type="evidence" value="ECO:0000318"/>
    <property type="project" value="GO_Central"/>
</dbReference>
<dbReference type="GO" id="GO:0031564">
    <property type="term" value="P:transcription antitermination"/>
    <property type="evidence" value="ECO:0000315"/>
    <property type="project" value="EcoCyc"/>
</dbReference>
<dbReference type="CDD" id="cd01639">
    <property type="entry name" value="IMPase"/>
    <property type="match status" value="1"/>
</dbReference>
<dbReference type="FunFam" id="3.30.540.10:FF:000003">
    <property type="entry name" value="Inositol-1-monophosphatase"/>
    <property type="match status" value="1"/>
</dbReference>
<dbReference type="FunFam" id="3.40.190.80:FF:000004">
    <property type="entry name" value="Inositol-1-monophosphatase"/>
    <property type="match status" value="1"/>
</dbReference>
<dbReference type="Gene3D" id="3.40.190.80">
    <property type="match status" value="1"/>
</dbReference>
<dbReference type="Gene3D" id="3.30.540.10">
    <property type="entry name" value="Fructose-1,6-Bisphosphatase, subunit A, domain 1"/>
    <property type="match status" value="1"/>
</dbReference>
<dbReference type="InterPro" id="IPR033942">
    <property type="entry name" value="IMPase"/>
</dbReference>
<dbReference type="InterPro" id="IPR020583">
    <property type="entry name" value="Inositol_monoP_metal-BS"/>
</dbReference>
<dbReference type="InterPro" id="IPR000760">
    <property type="entry name" value="Inositol_monophosphatase-like"/>
</dbReference>
<dbReference type="InterPro" id="IPR020550">
    <property type="entry name" value="Inositol_monophosphatase_CS"/>
</dbReference>
<dbReference type="InterPro" id="IPR022337">
    <property type="entry name" value="Inositol_monophosphatase_SuhB"/>
</dbReference>
<dbReference type="NCBIfam" id="NF008027">
    <property type="entry name" value="PRK10757.1"/>
    <property type="match status" value="1"/>
</dbReference>
<dbReference type="PANTHER" id="PTHR20854">
    <property type="entry name" value="INOSITOL MONOPHOSPHATASE"/>
    <property type="match status" value="1"/>
</dbReference>
<dbReference type="PANTHER" id="PTHR20854:SF4">
    <property type="entry name" value="INOSITOL-1-MONOPHOSPHATASE-RELATED"/>
    <property type="match status" value="1"/>
</dbReference>
<dbReference type="Pfam" id="PF00459">
    <property type="entry name" value="Inositol_P"/>
    <property type="match status" value="1"/>
</dbReference>
<dbReference type="PRINTS" id="PR00377">
    <property type="entry name" value="IMPHPHTASES"/>
</dbReference>
<dbReference type="PRINTS" id="PR01959">
    <property type="entry name" value="SBIMPHPHTASE"/>
</dbReference>
<dbReference type="SUPFAM" id="SSF56655">
    <property type="entry name" value="Carbohydrate phosphatase"/>
    <property type="match status" value="1"/>
</dbReference>
<dbReference type="PROSITE" id="PS00629">
    <property type="entry name" value="IMP_1"/>
    <property type="match status" value="1"/>
</dbReference>
<dbReference type="PROSITE" id="PS00630">
    <property type="entry name" value="IMP_2"/>
    <property type="match status" value="1"/>
</dbReference>
<evidence type="ECO:0000250" key="1"/>
<evidence type="ECO:0000269" key="2">
    <source>
    </source>
</evidence>
<evidence type="ECO:0000269" key="3">
    <source>
    </source>
</evidence>
<evidence type="ECO:0000269" key="4">
    <source>
    </source>
</evidence>
<evidence type="ECO:0000269" key="5">
    <source>
    </source>
</evidence>
<evidence type="ECO:0000269" key="6">
    <source>
    </source>
</evidence>
<evidence type="ECO:0000269" key="7">
    <source>
    </source>
</evidence>
<evidence type="ECO:0000269" key="8">
    <source>
    </source>
</evidence>
<evidence type="ECO:0000269" key="9">
    <source>
    </source>
</evidence>
<evidence type="ECO:0000269" key="10">
    <source>
    </source>
</evidence>
<evidence type="ECO:0000269" key="11">
    <source>
    </source>
</evidence>
<evidence type="ECO:0000269" key="12">
    <source>
    </source>
</evidence>
<evidence type="ECO:0000269" key="13">
    <source>
    </source>
</evidence>
<evidence type="ECO:0000269" key="14">
    <source>
    </source>
</evidence>
<evidence type="ECO:0000269" key="15">
    <source>
    </source>
</evidence>
<evidence type="ECO:0000303" key="16">
    <source>
    </source>
</evidence>
<evidence type="ECO:0000303" key="17">
    <source>
    </source>
</evidence>
<evidence type="ECO:0000303" key="18">
    <source>
    </source>
</evidence>
<evidence type="ECO:0000303" key="19">
    <source>
    </source>
</evidence>
<evidence type="ECO:0000303" key="20">
    <source>
    </source>
</evidence>
<evidence type="ECO:0000305" key="21"/>
<evidence type="ECO:0000305" key="22">
    <source>
    </source>
</evidence>
<evidence type="ECO:0000305" key="23">
    <source>
    </source>
</evidence>
<evidence type="ECO:0000305" key="24">
    <source>
    </source>
</evidence>
<evidence type="ECO:0000305" key="25">
    <source>
    </source>
</evidence>
<evidence type="ECO:0000305" key="26">
    <source>
    </source>
</evidence>
<evidence type="ECO:0000305" key="27">
    <source>
    </source>
</evidence>
<evidence type="ECO:0000305" key="28">
    <source>
    </source>
</evidence>
<evidence type="ECO:0000305" key="29">
    <source>
    </source>
</evidence>
<evidence type="ECO:0000305" key="30">
    <source>
    </source>
</evidence>
<evidence type="ECO:0000305" key="31">
    <source>
    </source>
</evidence>
<evidence type="ECO:0007744" key="32">
    <source>
        <dbReference type="PDB" id="2QFL"/>
    </source>
</evidence>
<evidence type="ECO:0007744" key="33">
    <source>
        <dbReference type="PDB" id="6IB7"/>
    </source>
</evidence>
<evidence type="ECO:0007744" key="34">
    <source>
        <dbReference type="PDB" id="6IB8"/>
    </source>
</evidence>
<evidence type="ECO:0007744" key="35">
    <source>
        <dbReference type="PDB" id="6TQN"/>
    </source>
</evidence>
<evidence type="ECO:0007744" key="36">
    <source>
        <dbReference type="PDB" id="6TQO"/>
    </source>
</evidence>
<evidence type="ECO:0007829" key="37">
    <source>
        <dbReference type="PDB" id="6IB8"/>
    </source>
</evidence>
<proteinExistence type="evidence at protein level"/>
<accession>P0ADG4</accession>
<accession>P22783</accession>
<accession>P77511</accession>
<accession>Q8X2E6</accession>
<keyword id="KW-0002">3D-structure</keyword>
<keyword id="KW-0143">Chaperone</keyword>
<keyword id="KW-0963">Cytoplasm</keyword>
<keyword id="KW-0378">Hydrolase</keyword>
<keyword id="KW-0460">Magnesium</keyword>
<keyword id="KW-0479">Metal-binding</keyword>
<keyword id="KW-1185">Reference proteome</keyword>
<keyword id="KW-0690">Ribosome biogenesis</keyword>
<keyword id="KW-0694">RNA-binding</keyword>
<keyword id="KW-0804">Transcription</keyword>
<keyword id="KW-0889">Transcription antitermination</keyword>
<keyword id="KW-0805">Transcription regulation</keyword>
<protein>
    <recommendedName>
        <fullName evidence="18">Nus factor SuhB</fullName>
    </recommendedName>
    <alternativeName>
        <fullName evidence="20">Inositol-1-monophosphatase</fullName>
        <shortName evidence="16">I-1-Pase</shortName>
        <shortName>IMPase</shortName>
        <shortName>Inositol-1-phosphatase</shortName>
        <ecNumber evidence="13">3.1.3.25</ecNumber>
    </alternativeName>
</protein>